<keyword id="KW-0963">Cytoplasm</keyword>
<keyword id="KW-0342">GTP-binding</keyword>
<keyword id="KW-0396">Initiation factor</keyword>
<keyword id="KW-0547">Nucleotide-binding</keyword>
<keyword id="KW-0648">Protein biosynthesis</keyword>
<keyword id="KW-1185">Reference proteome</keyword>
<proteinExistence type="inferred from homology"/>
<organism>
    <name type="scientific">Rhodospirillum rubrum (strain ATCC 11170 / ATH 1.1.1 / DSM 467 / LMG 4362 / NCIMB 8255 / S1)</name>
    <dbReference type="NCBI Taxonomy" id="269796"/>
    <lineage>
        <taxon>Bacteria</taxon>
        <taxon>Pseudomonadati</taxon>
        <taxon>Pseudomonadota</taxon>
        <taxon>Alphaproteobacteria</taxon>
        <taxon>Rhodospirillales</taxon>
        <taxon>Rhodospirillaceae</taxon>
        <taxon>Rhodospirillum</taxon>
    </lineage>
</organism>
<evidence type="ECO:0000250" key="1"/>
<evidence type="ECO:0000255" key="2">
    <source>
        <dbReference type="HAMAP-Rule" id="MF_00100"/>
    </source>
</evidence>
<evidence type="ECO:0000256" key="3">
    <source>
        <dbReference type="SAM" id="MobiDB-lite"/>
    </source>
</evidence>
<evidence type="ECO:0000305" key="4"/>
<feature type="chain" id="PRO_0000335503" description="Translation initiation factor IF-2">
    <location>
        <begin position="1"/>
        <end position="866"/>
    </location>
</feature>
<feature type="domain" description="tr-type G">
    <location>
        <begin position="365"/>
        <end position="533"/>
    </location>
</feature>
<feature type="region of interest" description="Disordered" evidence="3">
    <location>
        <begin position="1"/>
        <end position="63"/>
    </location>
</feature>
<feature type="region of interest" description="Disordered" evidence="3">
    <location>
        <begin position="92"/>
        <end position="257"/>
    </location>
</feature>
<feature type="region of interest" description="G1" evidence="1">
    <location>
        <begin position="374"/>
        <end position="381"/>
    </location>
</feature>
<feature type="region of interest" description="G2" evidence="1">
    <location>
        <begin position="399"/>
        <end position="403"/>
    </location>
</feature>
<feature type="region of interest" description="G3" evidence="1">
    <location>
        <begin position="421"/>
        <end position="424"/>
    </location>
</feature>
<feature type="region of interest" description="G4" evidence="1">
    <location>
        <begin position="475"/>
        <end position="478"/>
    </location>
</feature>
<feature type="region of interest" description="G5" evidence="1">
    <location>
        <begin position="511"/>
        <end position="513"/>
    </location>
</feature>
<feature type="compositionally biased region" description="Polar residues" evidence="3">
    <location>
        <begin position="26"/>
        <end position="36"/>
    </location>
</feature>
<feature type="compositionally biased region" description="Basic and acidic residues" evidence="3">
    <location>
        <begin position="92"/>
        <end position="135"/>
    </location>
</feature>
<feature type="compositionally biased region" description="Low complexity" evidence="3">
    <location>
        <begin position="152"/>
        <end position="164"/>
    </location>
</feature>
<feature type="compositionally biased region" description="Low complexity" evidence="3">
    <location>
        <begin position="179"/>
        <end position="197"/>
    </location>
</feature>
<feature type="binding site" evidence="2">
    <location>
        <begin position="374"/>
        <end position="381"/>
    </location>
    <ligand>
        <name>GTP</name>
        <dbReference type="ChEBI" id="CHEBI:37565"/>
    </ligand>
</feature>
<feature type="binding site" evidence="2">
    <location>
        <begin position="421"/>
        <end position="425"/>
    </location>
    <ligand>
        <name>GTP</name>
        <dbReference type="ChEBI" id="CHEBI:37565"/>
    </ligand>
</feature>
<feature type="binding site" evidence="2">
    <location>
        <begin position="475"/>
        <end position="478"/>
    </location>
    <ligand>
        <name>GTP</name>
        <dbReference type="ChEBI" id="CHEBI:37565"/>
    </ligand>
</feature>
<name>IF2_RHORT</name>
<reference key="1">
    <citation type="journal article" date="2011" name="Stand. Genomic Sci.">
        <title>Complete genome sequence of Rhodospirillum rubrum type strain (S1).</title>
        <authorList>
            <person name="Munk A.C."/>
            <person name="Copeland A."/>
            <person name="Lucas S."/>
            <person name="Lapidus A."/>
            <person name="Del Rio T.G."/>
            <person name="Barry K."/>
            <person name="Detter J.C."/>
            <person name="Hammon N."/>
            <person name="Israni S."/>
            <person name="Pitluck S."/>
            <person name="Brettin T."/>
            <person name="Bruce D."/>
            <person name="Han C."/>
            <person name="Tapia R."/>
            <person name="Gilna P."/>
            <person name="Schmutz J."/>
            <person name="Larimer F."/>
            <person name="Land M."/>
            <person name="Kyrpides N.C."/>
            <person name="Mavromatis K."/>
            <person name="Richardson P."/>
            <person name="Rohde M."/>
            <person name="Goeker M."/>
            <person name="Klenk H.P."/>
            <person name="Zhang Y."/>
            <person name="Roberts G.P."/>
            <person name="Reslewic S."/>
            <person name="Schwartz D.C."/>
        </authorList>
    </citation>
    <scope>NUCLEOTIDE SEQUENCE [LARGE SCALE GENOMIC DNA]</scope>
    <source>
        <strain>ATCC 11170 / ATH 1.1.1 / DSM 467 / LMG 4362 / NCIMB 8255 / S1</strain>
    </source>
</reference>
<gene>
    <name evidence="2" type="primary">infB</name>
    <name type="ordered locus">Rru_A3781</name>
</gene>
<comment type="function">
    <text evidence="2">One of the essential components for the initiation of protein synthesis. Protects formylmethionyl-tRNA from spontaneous hydrolysis and promotes its binding to the 30S ribosomal subunits. Also involved in the hydrolysis of GTP during the formation of the 70S ribosomal complex.</text>
</comment>
<comment type="subcellular location">
    <subcellularLocation>
        <location evidence="2">Cytoplasm</location>
    </subcellularLocation>
</comment>
<comment type="similarity">
    <text evidence="2">Belongs to the TRAFAC class translation factor GTPase superfamily. Classic translation factor GTPase family. IF-2 subfamily.</text>
</comment>
<comment type="sequence caution" evidence="4">
    <conflict type="erroneous initiation">
        <sequence resource="EMBL-CDS" id="ABC24575"/>
    </conflict>
</comment>
<protein>
    <recommendedName>
        <fullName evidence="2">Translation initiation factor IF-2</fullName>
    </recommendedName>
</protein>
<accession>Q2RMS0</accession>
<dbReference type="EMBL" id="CP000230">
    <property type="protein sequence ID" value="ABC24575.1"/>
    <property type="status" value="ALT_INIT"/>
    <property type="molecule type" value="Genomic_DNA"/>
</dbReference>
<dbReference type="RefSeq" id="WP_014626661.1">
    <property type="nucleotide sequence ID" value="NC_007643.1"/>
</dbReference>
<dbReference type="RefSeq" id="YP_428862.1">
    <property type="nucleotide sequence ID" value="NC_007643.1"/>
</dbReference>
<dbReference type="SMR" id="Q2RMS0"/>
<dbReference type="STRING" id="269796.Rru_A3781"/>
<dbReference type="EnsemblBacteria" id="ABC24575">
    <property type="protein sequence ID" value="ABC24575"/>
    <property type="gene ID" value="Rru_A3781"/>
</dbReference>
<dbReference type="KEGG" id="rru:Rru_A3781"/>
<dbReference type="PATRIC" id="fig|269796.9.peg.3903"/>
<dbReference type="eggNOG" id="COG0532">
    <property type="taxonomic scope" value="Bacteria"/>
</dbReference>
<dbReference type="HOGENOM" id="CLU_006301_10_1_5"/>
<dbReference type="Proteomes" id="UP000001929">
    <property type="component" value="Chromosome"/>
</dbReference>
<dbReference type="GO" id="GO:0005829">
    <property type="term" value="C:cytosol"/>
    <property type="evidence" value="ECO:0007669"/>
    <property type="project" value="TreeGrafter"/>
</dbReference>
<dbReference type="GO" id="GO:0005525">
    <property type="term" value="F:GTP binding"/>
    <property type="evidence" value="ECO:0007669"/>
    <property type="project" value="UniProtKB-KW"/>
</dbReference>
<dbReference type="GO" id="GO:0003924">
    <property type="term" value="F:GTPase activity"/>
    <property type="evidence" value="ECO:0007669"/>
    <property type="project" value="UniProtKB-UniRule"/>
</dbReference>
<dbReference type="GO" id="GO:0097216">
    <property type="term" value="F:guanosine tetraphosphate binding"/>
    <property type="evidence" value="ECO:0007669"/>
    <property type="project" value="UniProtKB-ARBA"/>
</dbReference>
<dbReference type="GO" id="GO:0003743">
    <property type="term" value="F:translation initiation factor activity"/>
    <property type="evidence" value="ECO:0007669"/>
    <property type="project" value="UniProtKB-UniRule"/>
</dbReference>
<dbReference type="CDD" id="cd01887">
    <property type="entry name" value="IF2_eIF5B"/>
    <property type="match status" value="1"/>
</dbReference>
<dbReference type="CDD" id="cd03702">
    <property type="entry name" value="IF2_mtIF2_II"/>
    <property type="match status" value="1"/>
</dbReference>
<dbReference type="CDD" id="cd03692">
    <property type="entry name" value="mtIF2_IVc"/>
    <property type="match status" value="1"/>
</dbReference>
<dbReference type="FunFam" id="2.40.30.10:FF:000007">
    <property type="entry name" value="Translation initiation factor IF-2"/>
    <property type="match status" value="1"/>
</dbReference>
<dbReference type="FunFam" id="2.40.30.10:FF:000008">
    <property type="entry name" value="Translation initiation factor IF-2"/>
    <property type="match status" value="1"/>
</dbReference>
<dbReference type="FunFam" id="3.40.50.10050:FF:000001">
    <property type="entry name" value="Translation initiation factor IF-2"/>
    <property type="match status" value="1"/>
</dbReference>
<dbReference type="FunFam" id="3.40.50.300:FF:000019">
    <property type="entry name" value="Translation initiation factor IF-2"/>
    <property type="match status" value="1"/>
</dbReference>
<dbReference type="Gene3D" id="3.40.50.300">
    <property type="entry name" value="P-loop containing nucleotide triphosphate hydrolases"/>
    <property type="match status" value="1"/>
</dbReference>
<dbReference type="Gene3D" id="2.40.30.10">
    <property type="entry name" value="Translation factors"/>
    <property type="match status" value="2"/>
</dbReference>
<dbReference type="Gene3D" id="3.40.50.10050">
    <property type="entry name" value="Translation initiation factor IF- 2, domain 3"/>
    <property type="match status" value="1"/>
</dbReference>
<dbReference type="HAMAP" id="MF_00100_B">
    <property type="entry name" value="IF_2_B"/>
    <property type="match status" value="1"/>
</dbReference>
<dbReference type="InterPro" id="IPR053905">
    <property type="entry name" value="EF-G-like_DII"/>
</dbReference>
<dbReference type="InterPro" id="IPR004161">
    <property type="entry name" value="EFTu-like_2"/>
</dbReference>
<dbReference type="InterPro" id="IPR013575">
    <property type="entry name" value="IF2_assoc_dom_bac"/>
</dbReference>
<dbReference type="InterPro" id="IPR044145">
    <property type="entry name" value="IF2_II"/>
</dbReference>
<dbReference type="InterPro" id="IPR006847">
    <property type="entry name" value="IF2_N"/>
</dbReference>
<dbReference type="InterPro" id="IPR027417">
    <property type="entry name" value="P-loop_NTPase"/>
</dbReference>
<dbReference type="InterPro" id="IPR005225">
    <property type="entry name" value="Small_GTP-bd"/>
</dbReference>
<dbReference type="InterPro" id="IPR000795">
    <property type="entry name" value="T_Tr_GTP-bd_dom"/>
</dbReference>
<dbReference type="InterPro" id="IPR000178">
    <property type="entry name" value="TF_IF2_bacterial-like"/>
</dbReference>
<dbReference type="InterPro" id="IPR015760">
    <property type="entry name" value="TIF_IF2"/>
</dbReference>
<dbReference type="InterPro" id="IPR023115">
    <property type="entry name" value="TIF_IF2_dom3"/>
</dbReference>
<dbReference type="InterPro" id="IPR036925">
    <property type="entry name" value="TIF_IF2_dom3_sf"/>
</dbReference>
<dbReference type="InterPro" id="IPR009000">
    <property type="entry name" value="Transl_B-barrel_sf"/>
</dbReference>
<dbReference type="NCBIfam" id="TIGR00487">
    <property type="entry name" value="IF-2"/>
    <property type="match status" value="1"/>
</dbReference>
<dbReference type="NCBIfam" id="TIGR00231">
    <property type="entry name" value="small_GTP"/>
    <property type="match status" value="1"/>
</dbReference>
<dbReference type="PANTHER" id="PTHR43381:SF5">
    <property type="entry name" value="TR-TYPE G DOMAIN-CONTAINING PROTEIN"/>
    <property type="match status" value="1"/>
</dbReference>
<dbReference type="PANTHER" id="PTHR43381">
    <property type="entry name" value="TRANSLATION INITIATION FACTOR IF-2-RELATED"/>
    <property type="match status" value="1"/>
</dbReference>
<dbReference type="Pfam" id="PF22042">
    <property type="entry name" value="EF-G_D2"/>
    <property type="match status" value="1"/>
</dbReference>
<dbReference type="Pfam" id="PF00009">
    <property type="entry name" value="GTP_EFTU"/>
    <property type="match status" value="1"/>
</dbReference>
<dbReference type="Pfam" id="PF03144">
    <property type="entry name" value="GTP_EFTU_D2"/>
    <property type="match status" value="1"/>
</dbReference>
<dbReference type="Pfam" id="PF11987">
    <property type="entry name" value="IF-2"/>
    <property type="match status" value="1"/>
</dbReference>
<dbReference type="Pfam" id="PF08364">
    <property type="entry name" value="IF2_assoc"/>
    <property type="match status" value="1"/>
</dbReference>
<dbReference type="Pfam" id="PF04760">
    <property type="entry name" value="IF2_N"/>
    <property type="match status" value="1"/>
</dbReference>
<dbReference type="SUPFAM" id="SSF52156">
    <property type="entry name" value="Initiation factor IF2/eIF5b, domain 3"/>
    <property type="match status" value="1"/>
</dbReference>
<dbReference type="SUPFAM" id="SSF52540">
    <property type="entry name" value="P-loop containing nucleoside triphosphate hydrolases"/>
    <property type="match status" value="1"/>
</dbReference>
<dbReference type="SUPFAM" id="SSF50447">
    <property type="entry name" value="Translation proteins"/>
    <property type="match status" value="2"/>
</dbReference>
<dbReference type="PROSITE" id="PS51722">
    <property type="entry name" value="G_TR_2"/>
    <property type="match status" value="1"/>
</dbReference>
<dbReference type="PROSITE" id="PS01176">
    <property type="entry name" value="IF2"/>
    <property type="match status" value="1"/>
</dbReference>
<sequence length="866" mass="93794">MTNDKDRKAPLSLSPKGKLELKKSAETGQVRQSFSHGRSKVVQVEVRKSKKRPATSGDPAAVQNAIRGAAVFDTGLTSEEMQGRRRAVEEAVVRAAEEAERKRLEEIERRRREEEEARLKVEEEARRKAEEEAARAARAAAGDAAETPAEDVAPAAPQVAAAPQAPAPAPTRSGPRPGPDASARPAAEAPRSPTEAPRPGPRRVVEDEDDDAPKKVASRGAVPPKPAPAKRVEPKRRGKLTVTAALEGDERSERGRSVAALRRAKQKEKRKAEMMSPAERVVREVIIPDVINVQELANRMAERGANVIKTLMKMGVMATINQTIDADTAELVVAEFGHASRRVSDSDVELGLGDALPDGTEVLTSRPPVVTVMGHVDHGKTSLLDAMRKTDVAGGEAGGITQHIGAYQVVTKSGQKITFIDTPGHAAFTAMRARGARVTDIVVLVVAANDGIMPQTIEAIRHARAAEVPVVVAINKMDLPDANPEKVRTDLLQHELVVEQLGGDVLNVEVSAKRRLNLDKLEEAILLQSEILDLKANADRACQGVVIEAKVEKGRGSVATILVQKGTLKVGDIFVAGAEWGRVRALVDDHGNRVIAATPAMPVEVLGFQGTPAAGDDFIVVEDENRAREISEYRQRKDRDAQQVRTARGTMEQMFERIQAGEARELPVVIKADVQGSVEALVGTLEKLGNDDVKIRVLHAAVGAINESDVTLAKASDGLIIGFNVRANPQAREMARRDGIDIRYHSIIYAVADEVKALLSGMLEPTFKESFIGYAAIREVFNITKVGKVAGCMVTEGIVKRGAKVRLLRDNVVIHEGSLSQLKRFKDDVREVREGYECGMSFETYNDIQVGDVIECFEMEEVAAVL</sequence>